<dbReference type="EC" id="1.14.-.-"/>
<dbReference type="EMBL" id="AF029857">
    <property type="protein sequence ID" value="AAC39317.1"/>
    <property type="molecule type" value="mRNA"/>
</dbReference>
<dbReference type="PIR" id="T14639">
    <property type="entry name" value="T14639"/>
</dbReference>
<dbReference type="SMR" id="O48957"/>
<dbReference type="eggNOG" id="KOG0156">
    <property type="taxonomic scope" value="Eukaryota"/>
</dbReference>
<dbReference type="ExpressionAtlas" id="O48957">
    <property type="expression patterns" value="baseline and differential"/>
</dbReference>
<dbReference type="GO" id="GO:0016020">
    <property type="term" value="C:membrane"/>
    <property type="evidence" value="ECO:0007669"/>
    <property type="project" value="UniProtKB-SubCell"/>
</dbReference>
<dbReference type="GO" id="GO:0020037">
    <property type="term" value="F:heme binding"/>
    <property type="evidence" value="ECO:0007669"/>
    <property type="project" value="InterPro"/>
</dbReference>
<dbReference type="GO" id="GO:0005506">
    <property type="term" value="F:iron ion binding"/>
    <property type="evidence" value="ECO:0007669"/>
    <property type="project" value="InterPro"/>
</dbReference>
<dbReference type="GO" id="GO:0004497">
    <property type="term" value="F:monooxygenase activity"/>
    <property type="evidence" value="ECO:0007669"/>
    <property type="project" value="UniProtKB-KW"/>
</dbReference>
<dbReference type="GO" id="GO:0016705">
    <property type="term" value="F:oxidoreductase activity, acting on paired donors, with incorporation or reduction of molecular oxygen"/>
    <property type="evidence" value="ECO:0007669"/>
    <property type="project" value="InterPro"/>
</dbReference>
<dbReference type="CDD" id="cd11072">
    <property type="entry name" value="CYP71-like"/>
    <property type="match status" value="1"/>
</dbReference>
<dbReference type="FunFam" id="1.10.630.10:FF:000043">
    <property type="entry name" value="Cytochrome P450 99A2"/>
    <property type="match status" value="1"/>
</dbReference>
<dbReference type="Gene3D" id="1.10.630.10">
    <property type="entry name" value="Cytochrome P450"/>
    <property type="match status" value="1"/>
</dbReference>
<dbReference type="InterPro" id="IPR001128">
    <property type="entry name" value="Cyt_P450"/>
</dbReference>
<dbReference type="InterPro" id="IPR017972">
    <property type="entry name" value="Cyt_P450_CS"/>
</dbReference>
<dbReference type="InterPro" id="IPR002401">
    <property type="entry name" value="Cyt_P450_E_grp-I"/>
</dbReference>
<dbReference type="InterPro" id="IPR036396">
    <property type="entry name" value="Cyt_P450_sf"/>
</dbReference>
<dbReference type="PANTHER" id="PTHR47955:SF8">
    <property type="entry name" value="CYTOCHROME P450 71D11-LIKE"/>
    <property type="match status" value="1"/>
</dbReference>
<dbReference type="PANTHER" id="PTHR47955">
    <property type="entry name" value="CYTOCHROME P450 FAMILY 71 PROTEIN"/>
    <property type="match status" value="1"/>
</dbReference>
<dbReference type="Pfam" id="PF00067">
    <property type="entry name" value="p450"/>
    <property type="match status" value="1"/>
</dbReference>
<dbReference type="PRINTS" id="PR00463">
    <property type="entry name" value="EP450I"/>
</dbReference>
<dbReference type="PRINTS" id="PR00385">
    <property type="entry name" value="P450"/>
</dbReference>
<dbReference type="SUPFAM" id="SSF48264">
    <property type="entry name" value="Cytochrome P450"/>
    <property type="match status" value="1"/>
</dbReference>
<dbReference type="PROSITE" id="PS00086">
    <property type="entry name" value="CYTOCHROME_P450"/>
    <property type="match status" value="1"/>
</dbReference>
<gene>
    <name type="primary">CYP99A1</name>
</gene>
<sequence length="519" mass="57050">RLISAVILAVCSLISRRKPSPGSKKKRPPGPWRLPLIGNLLHLATSQPHVALRDLAMKHGPVMYLRLGQVDAVVISSPAAAQEVLRDKDTTFASRPSLLVADIILYGSMDMSFAPYGGNWRMLRKLCMSELLNTHKVRQLAAVRDSETLSLVRKVVYAAGAGGGGRGQRGEAPVVNLGRLVLSCSMAITGRATLGKLCGDEIMSVVDVAVLYGSGFCAGDLFPSLWFVDVVTGLTRRLWTARRRLDAIFDRILAECEARQRQEEKMTGDDGFLGVLLRIRDDDGEPETGGISTTSIKAILFDMLAGGTETTSSAAEWIMSELMRKPEAMAKAQAEVRGALDGKSPEDHEGQMDKLSYTRMVVKEGLRLHPVLPLLLPRSCQETCDVGGFEVTKGTKVIVNAWALARSPERWHDPEEFRPERFADDDGSSAAVAVDYRGSQFEYIPFGSGRRMCPGNTFGLAALELMVARLLYYFDWSLPDGMRPEELDMDTVVGSTMRRRNHLHLVPSPYKETELTVGI</sequence>
<feature type="chain" id="PRO_0000052200" description="Cytochrome P450 CYP99A1">
    <location>
        <begin position="1" status="less than"/>
        <end position="519"/>
    </location>
</feature>
<feature type="binding site" description="axial binding residue" evidence="1">
    <location>
        <position position="453"/>
    </location>
    <ligand>
        <name>heme</name>
        <dbReference type="ChEBI" id="CHEBI:30413"/>
    </ligand>
    <ligandPart>
        <name>Fe</name>
        <dbReference type="ChEBI" id="CHEBI:18248"/>
    </ligandPart>
</feature>
<feature type="non-terminal residue">
    <location>
        <position position="1"/>
    </location>
</feature>
<organism>
    <name type="scientific">Sorghum bicolor</name>
    <name type="common">Sorghum</name>
    <name type="synonym">Sorghum vulgare</name>
    <dbReference type="NCBI Taxonomy" id="4558"/>
    <lineage>
        <taxon>Eukaryota</taxon>
        <taxon>Viridiplantae</taxon>
        <taxon>Streptophyta</taxon>
        <taxon>Embryophyta</taxon>
        <taxon>Tracheophyta</taxon>
        <taxon>Spermatophyta</taxon>
        <taxon>Magnoliopsida</taxon>
        <taxon>Liliopsida</taxon>
        <taxon>Poales</taxon>
        <taxon>Poaceae</taxon>
        <taxon>PACMAD clade</taxon>
        <taxon>Panicoideae</taxon>
        <taxon>Andropogonodae</taxon>
        <taxon>Andropogoneae</taxon>
        <taxon>Sorghinae</taxon>
        <taxon>Sorghum</taxon>
    </lineage>
</organism>
<comment type="cofactor">
    <cofactor evidence="1">
        <name>heme</name>
        <dbReference type="ChEBI" id="CHEBI:30413"/>
    </cofactor>
</comment>
<comment type="subcellular location">
    <subcellularLocation>
        <location evidence="2">Membrane</location>
    </subcellularLocation>
</comment>
<comment type="similarity">
    <text evidence="2">Belongs to the cytochrome P450 family.</text>
</comment>
<protein>
    <recommendedName>
        <fullName>Cytochrome P450 CYP99A1</fullName>
        <ecNumber>1.14.-.-</ecNumber>
    </recommendedName>
</protein>
<evidence type="ECO:0000250" key="1"/>
<evidence type="ECO:0000305" key="2"/>
<reference key="1">
    <citation type="journal article" date="1998" name="Plant Mol. Biol.">
        <title>Cloning of three A-type cytochromes P450, CYP71E1, CYP98, and CYP99 from Sorghum bicolor (L.) Moench by a PCR approach and identification by expression in Escherichia coli of CYP71E1 as a multifunctional cytochrome P450 in the biosynthesis of the cyanogenic glucoside dhurrin.</title>
        <authorList>
            <person name="Bak S."/>
            <person name="Kahn R.A."/>
            <person name="Nielsen H.L."/>
            <person name="Moeller B.L."/>
            <person name="Halkier B.A."/>
        </authorList>
    </citation>
    <scope>NUCLEOTIDE SEQUENCE [MRNA]</scope>
    <source>
        <strain>cv. SS1000</strain>
        <tissue>Etiolated seedling</tissue>
    </source>
</reference>
<proteinExistence type="evidence at transcript level"/>
<accession>O48957</accession>
<keyword id="KW-0349">Heme</keyword>
<keyword id="KW-0408">Iron</keyword>
<keyword id="KW-0472">Membrane</keyword>
<keyword id="KW-0479">Metal-binding</keyword>
<keyword id="KW-0503">Monooxygenase</keyword>
<keyword id="KW-0560">Oxidoreductase</keyword>
<name>C99A1_SORBI</name>